<evidence type="ECO:0000250" key="1"/>
<evidence type="ECO:0000255" key="2"/>
<evidence type="ECO:0000255" key="3">
    <source>
        <dbReference type="PROSITE-ProRule" id="PRU00219"/>
    </source>
</evidence>
<evidence type="ECO:0000256" key="4">
    <source>
        <dbReference type="SAM" id="MobiDB-lite"/>
    </source>
</evidence>
<evidence type="ECO:0000305" key="5"/>
<sequence>MGFSLTHTPHTTASPNLQLRFHSLLPPSFTSQPFLSLHSTFPPKRTVPKLRAQSENGAVLQASEEKLDASNYGRQYFPLAAVIGQDAIKTALLLGATDPRIGGIAISGRRGTAKTIMARGMHAILPPIEVVQGSIANADPSCPEEWEDGLYKRVEYDSDGNVKTHIIKSPFVQIPLGVTEDRLIGSVDVEESVKTGTTVFQPGLLAEAHRGVLYVDEINLLDEGISNLLLNVLTEGVNIVEREGISFRHPCRPLLIATYNPDEGSVREHLLDRIAINLSADLPMSFENRVEAVGIATEFQDNCGQVFKMVDEDTDNAKTQIILAREYLKDVTISKEQLKYLVIEALRGGVQGHRAELYAARVAKCLAALEGREKVYVDDLKKAVELVILPRSIITDTPPEQQNQPPPPPPPPQNQESNEEQNEEEEQEEEEEDDNDEENEQQQDQLPEEFIFDAEGGLVDEKLLFFAQQAQRRRGKAGRAKNVIFSEDRGRYIKPMLPKGPVKRLAVDATLRAAAPYQKLRREKDTENRRKVYVEKTDMRAKRMARKAGALVIFVVDASGSMALNRMQNAKGAALKLLAESYTSRDQVSIIPFRGDSAEVLLPPSRSIAMARKRLERLPCGGGSPLAHGLTTAVRVGLNAEKSGDVGRIMIVAITDGRANISLKRSNDPEAAAASDAPKPTSQELKDEIIEVAAKIYKTGMSLLVIDTENKFVSTGFAKEIARVAQGKYYYLPNASDAVVSLATREALAALKSS</sequence>
<feature type="transit peptide" description="Chloroplast" evidence="2">
    <location>
        <begin position="1"/>
        <end position="51"/>
    </location>
</feature>
<feature type="chain" id="PRO_0000002799" description="Magnesium-chelatase subunit ChlD, chloroplastic">
    <location>
        <begin position="52"/>
        <end position="754"/>
    </location>
</feature>
<feature type="domain" description="VWFA" evidence="3">
    <location>
        <begin position="551"/>
        <end position="751"/>
    </location>
</feature>
<feature type="region of interest" description="Disordered" evidence="4">
    <location>
        <begin position="395"/>
        <end position="443"/>
    </location>
</feature>
<feature type="compositionally biased region" description="Pro residues" evidence="4">
    <location>
        <begin position="404"/>
        <end position="413"/>
    </location>
</feature>
<feature type="compositionally biased region" description="Acidic residues" evidence="4">
    <location>
        <begin position="417"/>
        <end position="443"/>
    </location>
</feature>
<accession>O22437</accession>
<dbReference type="EC" id="6.6.1.1"/>
<dbReference type="EMBL" id="AF014399">
    <property type="protein sequence ID" value="AAB72194.1"/>
    <property type="molecule type" value="mRNA"/>
</dbReference>
<dbReference type="PIR" id="T06249">
    <property type="entry name" value="T06249"/>
</dbReference>
<dbReference type="SMR" id="O22437"/>
<dbReference type="EnsemblPlants" id="Psat0s3604g0040.1">
    <property type="protein sequence ID" value="Psat0s3604g0040.1.cds"/>
    <property type="gene ID" value="Psat0s3604g0040"/>
</dbReference>
<dbReference type="Gramene" id="Psat0s3604g0040.1">
    <property type="protein sequence ID" value="Psat0s3604g0040.1.cds"/>
    <property type="gene ID" value="Psat0s3604g0040"/>
</dbReference>
<dbReference type="OrthoDB" id="299997at2759"/>
<dbReference type="BRENDA" id="6.6.1.1">
    <property type="organism ID" value="4872"/>
</dbReference>
<dbReference type="UniPathway" id="UPA00668"/>
<dbReference type="GO" id="GO:0009507">
    <property type="term" value="C:chloroplast"/>
    <property type="evidence" value="ECO:0007669"/>
    <property type="project" value="UniProtKB-SubCell"/>
</dbReference>
<dbReference type="GO" id="GO:0005524">
    <property type="term" value="F:ATP binding"/>
    <property type="evidence" value="ECO:0007669"/>
    <property type="project" value="UniProtKB-KW"/>
</dbReference>
<dbReference type="GO" id="GO:0016887">
    <property type="term" value="F:ATP hydrolysis activity"/>
    <property type="evidence" value="ECO:0007669"/>
    <property type="project" value="InterPro"/>
</dbReference>
<dbReference type="GO" id="GO:0016851">
    <property type="term" value="F:magnesium chelatase activity"/>
    <property type="evidence" value="ECO:0007669"/>
    <property type="project" value="UniProtKB-EC"/>
</dbReference>
<dbReference type="GO" id="GO:0015995">
    <property type="term" value="P:chlorophyll biosynthetic process"/>
    <property type="evidence" value="ECO:0007669"/>
    <property type="project" value="UniProtKB-UniPathway"/>
</dbReference>
<dbReference type="GO" id="GO:0015979">
    <property type="term" value="P:photosynthesis"/>
    <property type="evidence" value="ECO:0007669"/>
    <property type="project" value="UniProtKB-KW"/>
</dbReference>
<dbReference type="CDD" id="cd01451">
    <property type="entry name" value="vWA_Magnesium_chelatase"/>
    <property type="match status" value="1"/>
</dbReference>
<dbReference type="FunFam" id="3.40.50.410:FF:000079">
    <property type="entry name" value="Mg-protoporphyrin IX chelatase"/>
    <property type="match status" value="1"/>
</dbReference>
<dbReference type="Gene3D" id="1.10.8.80">
    <property type="entry name" value="Magnesium chelatase subunit I, C-Terminal domain"/>
    <property type="match status" value="1"/>
</dbReference>
<dbReference type="Gene3D" id="3.40.50.300">
    <property type="entry name" value="P-loop containing nucleotide triphosphate hydrolases"/>
    <property type="match status" value="1"/>
</dbReference>
<dbReference type="Gene3D" id="3.40.50.410">
    <property type="entry name" value="von Willebrand factor, type A domain"/>
    <property type="match status" value="1"/>
</dbReference>
<dbReference type="InterPro" id="IPR003593">
    <property type="entry name" value="AAA+_ATPase"/>
</dbReference>
<dbReference type="InterPro" id="IPR041702">
    <property type="entry name" value="BchD/ChlD_VWA"/>
</dbReference>
<dbReference type="InterPro" id="IPR041628">
    <property type="entry name" value="ChlI/MoxR_AAA_lid"/>
</dbReference>
<dbReference type="InterPro" id="IPR011776">
    <property type="entry name" value="Mg_chelatase_ATPase-dsu"/>
</dbReference>
<dbReference type="InterPro" id="IPR000523">
    <property type="entry name" value="Mg_chelatse_chII-like_cat_dom"/>
</dbReference>
<dbReference type="InterPro" id="IPR027417">
    <property type="entry name" value="P-loop_NTPase"/>
</dbReference>
<dbReference type="InterPro" id="IPR002035">
    <property type="entry name" value="VWF_A"/>
</dbReference>
<dbReference type="InterPro" id="IPR036465">
    <property type="entry name" value="vWFA_dom_sf"/>
</dbReference>
<dbReference type="NCBIfam" id="TIGR02031">
    <property type="entry name" value="BchD-ChlD"/>
    <property type="match status" value="1"/>
</dbReference>
<dbReference type="PANTHER" id="PTHR43473">
    <property type="entry name" value="MAGNESIUM-CHELATASE SUBUNIT CHLD, CHLOROPLASTIC"/>
    <property type="match status" value="1"/>
</dbReference>
<dbReference type="PANTHER" id="PTHR43473:SF2">
    <property type="entry name" value="MAGNESIUM-CHELATASE SUBUNIT CHLD, CHLOROPLASTIC"/>
    <property type="match status" value="1"/>
</dbReference>
<dbReference type="Pfam" id="PF17863">
    <property type="entry name" value="AAA_lid_2"/>
    <property type="match status" value="1"/>
</dbReference>
<dbReference type="Pfam" id="PF01078">
    <property type="entry name" value="Mg_chelatase"/>
    <property type="match status" value="1"/>
</dbReference>
<dbReference type="Pfam" id="PF13519">
    <property type="entry name" value="VWA_2"/>
    <property type="match status" value="1"/>
</dbReference>
<dbReference type="SMART" id="SM00382">
    <property type="entry name" value="AAA"/>
    <property type="match status" value="1"/>
</dbReference>
<dbReference type="SMART" id="SM00327">
    <property type="entry name" value="VWA"/>
    <property type="match status" value="1"/>
</dbReference>
<dbReference type="SUPFAM" id="SSF52540">
    <property type="entry name" value="P-loop containing nucleoside triphosphate hydrolases"/>
    <property type="match status" value="1"/>
</dbReference>
<dbReference type="SUPFAM" id="SSF53300">
    <property type="entry name" value="vWA-like"/>
    <property type="match status" value="1"/>
</dbReference>
<dbReference type="PROSITE" id="PS50234">
    <property type="entry name" value="VWFA"/>
    <property type="match status" value="1"/>
</dbReference>
<proteinExistence type="evidence at transcript level"/>
<keyword id="KW-0067">ATP-binding</keyword>
<keyword id="KW-0149">Chlorophyll biosynthesis</keyword>
<keyword id="KW-0150">Chloroplast</keyword>
<keyword id="KW-0436">Ligase</keyword>
<keyword id="KW-0547">Nucleotide-binding</keyword>
<keyword id="KW-0602">Photosynthesis</keyword>
<keyword id="KW-0934">Plastid</keyword>
<keyword id="KW-0809">Transit peptide</keyword>
<protein>
    <recommendedName>
        <fullName>Magnesium-chelatase subunit ChlD, chloroplastic</fullName>
        <shortName>Mg-chelatase subunit D</shortName>
        <ecNumber>6.6.1.1</ecNumber>
    </recommendedName>
    <alternativeName>
        <fullName>Mg-protoporphyrin IX chelatase subunit ChlD</fullName>
    </alternativeName>
</protein>
<comment type="function">
    <text evidence="1">Involved in chlorophyll biosynthesis. Catalyzes the insertion of magnesium ion into protoporphyrin IX to yield Mg-protoporphyrin IX. The magnesium-chelatase is a complex of three subunits, CHLI, CHLD and CHLH. The reaction takes place in two steps, with an ATP-dependent activation followed by an ATP-dependent chelation step (By similarity).</text>
</comment>
<comment type="catalytic activity">
    <reaction>
        <text>protoporphyrin IX + Mg(2+) + ATP + H2O = Mg-protoporphyrin IX + ADP + phosphate + 3 H(+)</text>
        <dbReference type="Rhea" id="RHEA:13961"/>
        <dbReference type="ChEBI" id="CHEBI:15377"/>
        <dbReference type="ChEBI" id="CHEBI:15378"/>
        <dbReference type="ChEBI" id="CHEBI:18420"/>
        <dbReference type="ChEBI" id="CHEBI:30616"/>
        <dbReference type="ChEBI" id="CHEBI:43474"/>
        <dbReference type="ChEBI" id="CHEBI:57306"/>
        <dbReference type="ChEBI" id="CHEBI:60492"/>
        <dbReference type="ChEBI" id="CHEBI:456216"/>
        <dbReference type="EC" id="6.6.1.1"/>
    </reaction>
</comment>
<comment type="pathway">
    <text>Porphyrin-containing compound metabolism; chlorophyll biosynthesis.</text>
</comment>
<comment type="subunit">
    <text>The magnesium chelatase complex is a heterotrimer consisting of subunits CHLI, CHLD and CHLH.</text>
</comment>
<comment type="subcellular location">
    <subcellularLocation>
        <location evidence="5">Plastid</location>
        <location evidence="5">Chloroplast</location>
    </subcellularLocation>
</comment>
<comment type="similarity">
    <text evidence="5">Belongs to the Mg-chelatase subunits D/I family.</text>
</comment>
<gene>
    <name type="primary">CHLD</name>
</gene>
<reference key="1">
    <citation type="online journal article" date="1997" name="Plant Gene Register">
        <title>Cloning and sequencing of a cDNA encoding the putative Mg-chelatase subunit D from pea (Pisum sativum L. cv. Spring).</title>
        <authorList>
            <person name="Luo M."/>
            <person name="Weinstein J.D."/>
        </authorList>
        <locator>PGR97-139</locator>
    </citation>
    <scope>NUCLEOTIDE SEQUENCE [MRNA]</scope>
    <source>
        <strain>cv. Spring</strain>
        <tissue>Leaf</tissue>
    </source>
</reference>
<organism>
    <name type="scientific">Pisum sativum</name>
    <name type="common">Garden pea</name>
    <name type="synonym">Lathyrus oleraceus</name>
    <dbReference type="NCBI Taxonomy" id="3888"/>
    <lineage>
        <taxon>Eukaryota</taxon>
        <taxon>Viridiplantae</taxon>
        <taxon>Streptophyta</taxon>
        <taxon>Embryophyta</taxon>
        <taxon>Tracheophyta</taxon>
        <taxon>Spermatophyta</taxon>
        <taxon>Magnoliopsida</taxon>
        <taxon>eudicotyledons</taxon>
        <taxon>Gunneridae</taxon>
        <taxon>Pentapetalae</taxon>
        <taxon>rosids</taxon>
        <taxon>fabids</taxon>
        <taxon>Fabales</taxon>
        <taxon>Fabaceae</taxon>
        <taxon>Papilionoideae</taxon>
        <taxon>50 kb inversion clade</taxon>
        <taxon>NPAAA clade</taxon>
        <taxon>Hologalegina</taxon>
        <taxon>IRL clade</taxon>
        <taxon>Fabeae</taxon>
        <taxon>Pisum</taxon>
    </lineage>
</organism>
<name>CHLD_PEA</name>